<evidence type="ECO:0000255" key="1">
    <source>
        <dbReference type="HAMAP-Rule" id="MF_00131"/>
    </source>
</evidence>
<gene>
    <name evidence="1" type="primary">trpA</name>
    <name type="ordered locus">E2348C_1450</name>
</gene>
<protein>
    <recommendedName>
        <fullName evidence="1">Tryptophan synthase alpha chain</fullName>
        <ecNumber evidence="1">4.2.1.20</ecNumber>
    </recommendedName>
</protein>
<feature type="chain" id="PRO_1000198712" description="Tryptophan synthase alpha chain">
    <location>
        <begin position="1"/>
        <end position="268"/>
    </location>
</feature>
<feature type="active site" description="Proton acceptor" evidence="1">
    <location>
        <position position="49"/>
    </location>
</feature>
<feature type="active site" description="Proton acceptor" evidence="1">
    <location>
        <position position="60"/>
    </location>
</feature>
<sequence length="268" mass="28734">MERYESLFAQLKERKEGAFVPFVTLGDPGIEQSLKIIDTLIEAGADALELGIPFSDPLADGPTIQNATLRAFAAGVTPAQCFEVLALIRQKHPTIPIGLLMYANLVFNKGIDEFYAECEKVGVDSVLVADVPVEESAPFRQAALRHNVAPIFICPPNADDDLLRQIASYGRGYTYLLSRAGVTGAENRAALPLNHLVAKLKEYNAAPPLQGFGISAPDQVKAAIDAGAAGAISGSAIVKIIEQHINEPEKMLAALKAFVQPMKAATRR</sequence>
<dbReference type="EC" id="4.2.1.20" evidence="1"/>
<dbReference type="EMBL" id="FM180568">
    <property type="protein sequence ID" value="CAS08998.1"/>
    <property type="molecule type" value="Genomic_DNA"/>
</dbReference>
<dbReference type="RefSeq" id="WP_000443085.1">
    <property type="nucleotide sequence ID" value="NC_011601.1"/>
</dbReference>
<dbReference type="SMR" id="B7UR66"/>
<dbReference type="KEGG" id="ecg:E2348C_1450"/>
<dbReference type="HOGENOM" id="CLU_016734_0_4_6"/>
<dbReference type="UniPathway" id="UPA00035">
    <property type="reaction ID" value="UER00044"/>
</dbReference>
<dbReference type="Proteomes" id="UP000008205">
    <property type="component" value="Chromosome"/>
</dbReference>
<dbReference type="GO" id="GO:0005829">
    <property type="term" value="C:cytosol"/>
    <property type="evidence" value="ECO:0007669"/>
    <property type="project" value="TreeGrafter"/>
</dbReference>
<dbReference type="GO" id="GO:0004834">
    <property type="term" value="F:tryptophan synthase activity"/>
    <property type="evidence" value="ECO:0007669"/>
    <property type="project" value="UniProtKB-UniRule"/>
</dbReference>
<dbReference type="CDD" id="cd04724">
    <property type="entry name" value="Tryptophan_synthase_alpha"/>
    <property type="match status" value="1"/>
</dbReference>
<dbReference type="FunFam" id="3.20.20.70:FF:000037">
    <property type="entry name" value="Tryptophan synthase alpha chain"/>
    <property type="match status" value="1"/>
</dbReference>
<dbReference type="Gene3D" id="3.20.20.70">
    <property type="entry name" value="Aldolase class I"/>
    <property type="match status" value="1"/>
</dbReference>
<dbReference type="HAMAP" id="MF_00131">
    <property type="entry name" value="Trp_synth_alpha"/>
    <property type="match status" value="1"/>
</dbReference>
<dbReference type="InterPro" id="IPR013785">
    <property type="entry name" value="Aldolase_TIM"/>
</dbReference>
<dbReference type="InterPro" id="IPR011060">
    <property type="entry name" value="RibuloseP-bd_barrel"/>
</dbReference>
<dbReference type="InterPro" id="IPR018204">
    <property type="entry name" value="Trp_synthase_alpha_AS"/>
</dbReference>
<dbReference type="InterPro" id="IPR002028">
    <property type="entry name" value="Trp_synthase_suA"/>
</dbReference>
<dbReference type="NCBIfam" id="TIGR00262">
    <property type="entry name" value="trpA"/>
    <property type="match status" value="1"/>
</dbReference>
<dbReference type="PANTHER" id="PTHR43406:SF1">
    <property type="entry name" value="TRYPTOPHAN SYNTHASE ALPHA CHAIN, CHLOROPLASTIC"/>
    <property type="match status" value="1"/>
</dbReference>
<dbReference type="PANTHER" id="PTHR43406">
    <property type="entry name" value="TRYPTOPHAN SYNTHASE, ALPHA CHAIN"/>
    <property type="match status" value="1"/>
</dbReference>
<dbReference type="Pfam" id="PF00290">
    <property type="entry name" value="Trp_syntA"/>
    <property type="match status" value="1"/>
</dbReference>
<dbReference type="SUPFAM" id="SSF51366">
    <property type="entry name" value="Ribulose-phoshate binding barrel"/>
    <property type="match status" value="1"/>
</dbReference>
<dbReference type="PROSITE" id="PS00167">
    <property type="entry name" value="TRP_SYNTHASE_ALPHA"/>
    <property type="match status" value="1"/>
</dbReference>
<organism>
    <name type="scientific">Escherichia coli O127:H6 (strain E2348/69 / EPEC)</name>
    <dbReference type="NCBI Taxonomy" id="574521"/>
    <lineage>
        <taxon>Bacteria</taxon>
        <taxon>Pseudomonadati</taxon>
        <taxon>Pseudomonadota</taxon>
        <taxon>Gammaproteobacteria</taxon>
        <taxon>Enterobacterales</taxon>
        <taxon>Enterobacteriaceae</taxon>
        <taxon>Escherichia</taxon>
    </lineage>
</organism>
<name>TRPA_ECO27</name>
<proteinExistence type="inferred from homology"/>
<accession>B7UR66</accession>
<comment type="function">
    <text evidence="1">The alpha subunit is responsible for the aldol cleavage of indoleglycerol phosphate to indole and glyceraldehyde 3-phosphate.</text>
</comment>
<comment type="catalytic activity">
    <reaction evidence="1">
        <text>(1S,2R)-1-C-(indol-3-yl)glycerol 3-phosphate + L-serine = D-glyceraldehyde 3-phosphate + L-tryptophan + H2O</text>
        <dbReference type="Rhea" id="RHEA:10532"/>
        <dbReference type="ChEBI" id="CHEBI:15377"/>
        <dbReference type="ChEBI" id="CHEBI:33384"/>
        <dbReference type="ChEBI" id="CHEBI:57912"/>
        <dbReference type="ChEBI" id="CHEBI:58866"/>
        <dbReference type="ChEBI" id="CHEBI:59776"/>
        <dbReference type="EC" id="4.2.1.20"/>
    </reaction>
</comment>
<comment type="pathway">
    <text evidence="1">Amino-acid biosynthesis; L-tryptophan biosynthesis; L-tryptophan from chorismate: step 5/5.</text>
</comment>
<comment type="subunit">
    <text evidence="1">Tetramer of two alpha and two beta chains.</text>
</comment>
<comment type="similarity">
    <text evidence="1">Belongs to the TrpA family.</text>
</comment>
<keyword id="KW-0028">Amino-acid biosynthesis</keyword>
<keyword id="KW-0057">Aromatic amino acid biosynthesis</keyword>
<keyword id="KW-0456">Lyase</keyword>
<keyword id="KW-1185">Reference proteome</keyword>
<keyword id="KW-0822">Tryptophan biosynthesis</keyword>
<reference key="1">
    <citation type="journal article" date="2009" name="J. Bacteriol.">
        <title>Complete genome sequence and comparative genome analysis of enteropathogenic Escherichia coli O127:H6 strain E2348/69.</title>
        <authorList>
            <person name="Iguchi A."/>
            <person name="Thomson N.R."/>
            <person name="Ogura Y."/>
            <person name="Saunders D."/>
            <person name="Ooka T."/>
            <person name="Henderson I.R."/>
            <person name="Harris D."/>
            <person name="Asadulghani M."/>
            <person name="Kurokawa K."/>
            <person name="Dean P."/>
            <person name="Kenny B."/>
            <person name="Quail M.A."/>
            <person name="Thurston S."/>
            <person name="Dougan G."/>
            <person name="Hayashi T."/>
            <person name="Parkhill J."/>
            <person name="Frankel G."/>
        </authorList>
    </citation>
    <scope>NUCLEOTIDE SEQUENCE [LARGE SCALE GENOMIC DNA]</scope>
    <source>
        <strain>E2348/69 / EPEC</strain>
    </source>
</reference>